<feature type="chain" id="PRO_0000291424" description="UPF0435 protein SE_1565">
    <location>
        <begin position="1"/>
        <end position="71"/>
    </location>
</feature>
<name>Y1565_STAES</name>
<reference key="1">
    <citation type="journal article" date="2003" name="Mol. Microbiol.">
        <title>Genome-based analysis of virulence genes in a non-biofilm-forming Staphylococcus epidermidis strain (ATCC 12228).</title>
        <authorList>
            <person name="Zhang Y.-Q."/>
            <person name="Ren S.-X."/>
            <person name="Li H.-L."/>
            <person name="Wang Y.-X."/>
            <person name="Fu G."/>
            <person name="Yang J."/>
            <person name="Qin Z.-Q."/>
            <person name="Miao Y.-G."/>
            <person name="Wang W.-Y."/>
            <person name="Chen R.-S."/>
            <person name="Shen Y."/>
            <person name="Chen Z."/>
            <person name="Yuan Z.-H."/>
            <person name="Zhao G.-P."/>
            <person name="Qu D."/>
            <person name="Danchin A."/>
            <person name="Wen Y.-M."/>
        </authorList>
    </citation>
    <scope>NUCLEOTIDE SEQUENCE [LARGE SCALE GENOMIC DNA]</scope>
    <source>
        <strain>ATCC 12228 / FDA PCI 1200</strain>
    </source>
</reference>
<protein>
    <recommendedName>
        <fullName evidence="1">UPF0435 protein SE_1565</fullName>
    </recommendedName>
</protein>
<organism>
    <name type="scientific">Staphylococcus epidermidis (strain ATCC 12228 / FDA PCI 1200)</name>
    <dbReference type="NCBI Taxonomy" id="176280"/>
    <lineage>
        <taxon>Bacteria</taxon>
        <taxon>Bacillati</taxon>
        <taxon>Bacillota</taxon>
        <taxon>Bacilli</taxon>
        <taxon>Bacillales</taxon>
        <taxon>Staphylococcaceae</taxon>
        <taxon>Staphylococcus</taxon>
    </lineage>
</organism>
<evidence type="ECO:0000255" key="1">
    <source>
        <dbReference type="HAMAP-Rule" id="MF_00829"/>
    </source>
</evidence>
<sequence length="71" mass="8140">MSLSNEEMISNIRQKLNIVNQALLNPEKFKSTPHQDISEIYEFVMSKDSFSPSEVTAIADHLGQLRQDMED</sequence>
<comment type="similarity">
    <text evidence="1">Belongs to the UPF0435 family.</text>
</comment>
<proteinExistence type="inferred from homology"/>
<dbReference type="EMBL" id="AE015929">
    <property type="protein sequence ID" value="AAO05164.1"/>
    <property type="molecule type" value="Genomic_DNA"/>
</dbReference>
<dbReference type="RefSeq" id="NP_765120.1">
    <property type="nucleotide sequence ID" value="NC_004461.1"/>
</dbReference>
<dbReference type="RefSeq" id="WP_001830421.1">
    <property type="nucleotide sequence ID" value="NZ_WBME01000010.1"/>
</dbReference>
<dbReference type="SMR" id="Q8CRV4"/>
<dbReference type="KEGG" id="sep:SE_1565"/>
<dbReference type="PATRIC" id="fig|176280.10.peg.1529"/>
<dbReference type="eggNOG" id="COG4840">
    <property type="taxonomic scope" value="Bacteria"/>
</dbReference>
<dbReference type="HOGENOM" id="CLU_199533_0_0_9"/>
<dbReference type="OrthoDB" id="2404926at2"/>
<dbReference type="Proteomes" id="UP000001411">
    <property type="component" value="Chromosome"/>
</dbReference>
<dbReference type="HAMAP" id="MF_00829">
    <property type="entry name" value="UPF0435"/>
    <property type="match status" value="1"/>
</dbReference>
<dbReference type="InterPro" id="IPR009507">
    <property type="entry name" value="UPF0435"/>
</dbReference>
<dbReference type="Pfam" id="PF06569">
    <property type="entry name" value="DUF1128"/>
    <property type="match status" value="1"/>
</dbReference>
<accession>Q8CRV4</accession>
<gene>
    <name type="ordered locus">SE_1565</name>
</gene>